<organism>
    <name type="scientific">Leptospira borgpetersenii serovar Hardjo-bovis (strain JB197)</name>
    <dbReference type="NCBI Taxonomy" id="355277"/>
    <lineage>
        <taxon>Bacteria</taxon>
        <taxon>Pseudomonadati</taxon>
        <taxon>Spirochaetota</taxon>
        <taxon>Spirochaetia</taxon>
        <taxon>Leptospirales</taxon>
        <taxon>Leptospiraceae</taxon>
        <taxon>Leptospira</taxon>
    </lineage>
</organism>
<name>LFTR_LEPBJ</name>
<protein>
    <recommendedName>
        <fullName evidence="1">Leucyl/phenylalanyl-tRNA--protein transferase</fullName>
        <ecNumber evidence="1">2.3.2.6</ecNumber>
    </recommendedName>
    <alternativeName>
        <fullName evidence="1">L/F-transferase</fullName>
    </alternativeName>
    <alternativeName>
        <fullName evidence="1">Leucyltransferase</fullName>
    </alternativeName>
    <alternativeName>
        <fullName evidence="1">Phenyalanyltransferase</fullName>
    </alternativeName>
</protein>
<gene>
    <name evidence="1" type="primary">aat</name>
    <name type="ordered locus">LBJ_0088</name>
</gene>
<feature type="chain" id="PRO_0000304339" description="Leucyl/phenylalanyl-tRNA--protein transferase">
    <location>
        <begin position="1"/>
        <end position="219"/>
    </location>
</feature>
<reference key="1">
    <citation type="journal article" date="2006" name="Proc. Natl. Acad. Sci. U.S.A.">
        <title>Genome reduction in Leptospira borgpetersenii reflects limited transmission potential.</title>
        <authorList>
            <person name="Bulach D.M."/>
            <person name="Zuerner R.L."/>
            <person name="Wilson P."/>
            <person name="Seemann T."/>
            <person name="McGrath A."/>
            <person name="Cullen P.A."/>
            <person name="Davis J."/>
            <person name="Johnson M."/>
            <person name="Kuczek E."/>
            <person name="Alt D.P."/>
            <person name="Peterson-Burch B."/>
            <person name="Coppel R.L."/>
            <person name="Rood J.I."/>
            <person name="Davies J.K."/>
            <person name="Adler B."/>
        </authorList>
    </citation>
    <scope>NUCLEOTIDE SEQUENCE [LARGE SCALE GENOMIC DNA]</scope>
    <source>
        <strain>JB197</strain>
    </source>
</reference>
<proteinExistence type="inferred from homology"/>
<comment type="function">
    <text evidence="1">Functions in the N-end rule pathway of protein degradation where it conjugates Leu, Phe and, less efficiently, Met from aminoacyl-tRNAs to the N-termini of proteins containing an N-terminal arginine or lysine.</text>
</comment>
<comment type="catalytic activity">
    <reaction evidence="1">
        <text>N-terminal L-lysyl-[protein] + L-leucyl-tRNA(Leu) = N-terminal L-leucyl-L-lysyl-[protein] + tRNA(Leu) + H(+)</text>
        <dbReference type="Rhea" id="RHEA:12340"/>
        <dbReference type="Rhea" id="RHEA-COMP:9613"/>
        <dbReference type="Rhea" id="RHEA-COMP:9622"/>
        <dbReference type="Rhea" id="RHEA-COMP:12670"/>
        <dbReference type="Rhea" id="RHEA-COMP:12671"/>
        <dbReference type="ChEBI" id="CHEBI:15378"/>
        <dbReference type="ChEBI" id="CHEBI:65249"/>
        <dbReference type="ChEBI" id="CHEBI:78442"/>
        <dbReference type="ChEBI" id="CHEBI:78494"/>
        <dbReference type="ChEBI" id="CHEBI:133043"/>
        <dbReference type="EC" id="2.3.2.6"/>
    </reaction>
</comment>
<comment type="catalytic activity">
    <reaction evidence="1">
        <text>N-terminal L-arginyl-[protein] + L-leucyl-tRNA(Leu) = N-terminal L-leucyl-L-arginyl-[protein] + tRNA(Leu) + H(+)</text>
        <dbReference type="Rhea" id="RHEA:50416"/>
        <dbReference type="Rhea" id="RHEA-COMP:9613"/>
        <dbReference type="Rhea" id="RHEA-COMP:9622"/>
        <dbReference type="Rhea" id="RHEA-COMP:12672"/>
        <dbReference type="Rhea" id="RHEA-COMP:12673"/>
        <dbReference type="ChEBI" id="CHEBI:15378"/>
        <dbReference type="ChEBI" id="CHEBI:64719"/>
        <dbReference type="ChEBI" id="CHEBI:78442"/>
        <dbReference type="ChEBI" id="CHEBI:78494"/>
        <dbReference type="ChEBI" id="CHEBI:133044"/>
        <dbReference type="EC" id="2.3.2.6"/>
    </reaction>
</comment>
<comment type="catalytic activity">
    <reaction evidence="1">
        <text>L-phenylalanyl-tRNA(Phe) + an N-terminal L-alpha-aminoacyl-[protein] = an N-terminal L-phenylalanyl-L-alpha-aminoacyl-[protein] + tRNA(Phe)</text>
        <dbReference type="Rhea" id="RHEA:43632"/>
        <dbReference type="Rhea" id="RHEA-COMP:9668"/>
        <dbReference type="Rhea" id="RHEA-COMP:9699"/>
        <dbReference type="Rhea" id="RHEA-COMP:10636"/>
        <dbReference type="Rhea" id="RHEA-COMP:10637"/>
        <dbReference type="ChEBI" id="CHEBI:78442"/>
        <dbReference type="ChEBI" id="CHEBI:78531"/>
        <dbReference type="ChEBI" id="CHEBI:78597"/>
        <dbReference type="ChEBI" id="CHEBI:83561"/>
        <dbReference type="EC" id="2.3.2.6"/>
    </reaction>
</comment>
<comment type="subcellular location">
    <subcellularLocation>
        <location evidence="1">Cytoplasm</location>
    </subcellularLocation>
</comment>
<comment type="similarity">
    <text evidence="1">Belongs to the L/F-transferase family.</text>
</comment>
<evidence type="ECO:0000255" key="1">
    <source>
        <dbReference type="HAMAP-Rule" id="MF_00688"/>
    </source>
</evidence>
<keyword id="KW-0012">Acyltransferase</keyword>
<keyword id="KW-0963">Cytoplasm</keyword>
<keyword id="KW-0808">Transferase</keyword>
<sequence length="219" mass="25580">MKDFSDFFRNPHIWDREIVAVGGDLSPERLLYAYKNGIFPWSDQPILWYCLDPRGIFDLNKLHISKRLKRKINQKRYTITFNRAFEQVMRCCAYRPGEETWITDLFIKSYTEFHKLGYAHSIEVWDENGNLGGGVYGVAIGNFFAGESMFSFISDFGKIGLFHLFEALKKDQFTLFDTQQLNIVTLCLGAYQIPKKEYLRRLESAVASGKKWNPLRTVF</sequence>
<dbReference type="EC" id="2.3.2.6" evidence="1"/>
<dbReference type="EMBL" id="CP000350">
    <property type="protein sequence ID" value="ABJ74835.1"/>
    <property type="molecule type" value="Genomic_DNA"/>
</dbReference>
<dbReference type="RefSeq" id="WP_002732728.1">
    <property type="nucleotide sequence ID" value="NC_008510.1"/>
</dbReference>
<dbReference type="SMR" id="Q04W85"/>
<dbReference type="GeneID" id="61172287"/>
<dbReference type="KEGG" id="lbj:LBJ_0088"/>
<dbReference type="HOGENOM" id="CLU_075045_0_1_12"/>
<dbReference type="Proteomes" id="UP000000656">
    <property type="component" value="Chromosome 1"/>
</dbReference>
<dbReference type="GO" id="GO:0005737">
    <property type="term" value="C:cytoplasm"/>
    <property type="evidence" value="ECO:0007669"/>
    <property type="project" value="UniProtKB-SubCell"/>
</dbReference>
<dbReference type="GO" id="GO:0008914">
    <property type="term" value="F:leucyl-tRNA--protein transferase activity"/>
    <property type="evidence" value="ECO:0007669"/>
    <property type="project" value="UniProtKB-UniRule"/>
</dbReference>
<dbReference type="GO" id="GO:0030163">
    <property type="term" value="P:protein catabolic process"/>
    <property type="evidence" value="ECO:0007669"/>
    <property type="project" value="UniProtKB-UniRule"/>
</dbReference>
<dbReference type="FunFam" id="3.40.630.70:FF:000001">
    <property type="entry name" value="Leucyl/phenylalanyl-tRNA--protein transferase"/>
    <property type="match status" value="1"/>
</dbReference>
<dbReference type="Gene3D" id="3.40.630.70">
    <property type="entry name" value="Leucyl/phenylalanyl-tRNA-protein transferase, C-terminal domain"/>
    <property type="match status" value="1"/>
</dbReference>
<dbReference type="Gene3D" id="3.30.70.3550">
    <property type="entry name" value="Leucyl/phenylalanyl-tRNA-protein transferase, N-terminal domain"/>
    <property type="match status" value="1"/>
</dbReference>
<dbReference type="HAMAP" id="MF_00688">
    <property type="entry name" value="Leu_Phe_trans"/>
    <property type="match status" value="1"/>
</dbReference>
<dbReference type="InterPro" id="IPR016181">
    <property type="entry name" value="Acyl_CoA_acyltransferase"/>
</dbReference>
<dbReference type="InterPro" id="IPR004616">
    <property type="entry name" value="Leu/Phe-tRNA_Trfase"/>
</dbReference>
<dbReference type="InterPro" id="IPR042203">
    <property type="entry name" value="Leu/Phe-tRNA_Trfase_C"/>
</dbReference>
<dbReference type="InterPro" id="IPR042221">
    <property type="entry name" value="Leu/Phe-tRNA_Trfase_N"/>
</dbReference>
<dbReference type="NCBIfam" id="TIGR00667">
    <property type="entry name" value="aat"/>
    <property type="match status" value="1"/>
</dbReference>
<dbReference type="PANTHER" id="PTHR30098">
    <property type="entry name" value="LEUCYL/PHENYLALANYL-TRNA--PROTEIN TRANSFERASE"/>
    <property type="match status" value="1"/>
</dbReference>
<dbReference type="PANTHER" id="PTHR30098:SF2">
    <property type="entry name" value="LEUCYL_PHENYLALANYL-TRNA--PROTEIN TRANSFERASE"/>
    <property type="match status" value="1"/>
</dbReference>
<dbReference type="Pfam" id="PF03588">
    <property type="entry name" value="Leu_Phe_trans"/>
    <property type="match status" value="1"/>
</dbReference>
<dbReference type="SUPFAM" id="SSF55729">
    <property type="entry name" value="Acyl-CoA N-acyltransferases (Nat)"/>
    <property type="match status" value="1"/>
</dbReference>
<accession>Q04W85</accession>